<proteinExistence type="inferred from homology"/>
<comment type="function">
    <text evidence="1">This is one of the proteins that bind and probably mediate the attachment of the 5S RNA into the large ribosomal subunit, where it forms part of the central protuberance. In the 70S ribosome it contacts protein S13 of the 30S subunit (bridge B1b), connecting the 2 subunits; this bridge is implicated in subunit movement. Contacts the P site tRNA; the 5S rRNA and some of its associated proteins might help stabilize positioning of ribosome-bound tRNAs.</text>
</comment>
<comment type="subunit">
    <text evidence="1">Part of the 50S ribosomal subunit; part of the 5S rRNA/L5/L18/L25 subcomplex. Contacts the 5S rRNA and the P site tRNA. Forms a bridge to the 30S subunit in the 70S ribosome.</text>
</comment>
<comment type="similarity">
    <text evidence="1">Belongs to the universal ribosomal protein uL5 family.</text>
</comment>
<name>RL5_STAAS</name>
<sequence>MNRLKEKFNTEVTENLMKKFNYSSVMEVPKIDKIVVNMGVGDAVQNSKVLDNAVEELELITGQKPLVTKAKKSIATFRLREGMPIGAKVTLRGERMYEFLDKLISVSLPRVRDFQGVSKKAFDGRGNYTLGVKEQLIFPEIDYDKVSKVRGMDIVIVTTANTDEEARELLANFGMPFRK</sequence>
<evidence type="ECO:0000255" key="1">
    <source>
        <dbReference type="HAMAP-Rule" id="MF_01333"/>
    </source>
</evidence>
<evidence type="ECO:0000305" key="2"/>
<accession>Q6G783</accession>
<reference key="1">
    <citation type="journal article" date="2004" name="Proc. Natl. Acad. Sci. U.S.A.">
        <title>Complete genomes of two clinical Staphylococcus aureus strains: evidence for the rapid evolution of virulence and drug resistance.</title>
        <authorList>
            <person name="Holden M.T.G."/>
            <person name="Feil E.J."/>
            <person name="Lindsay J.A."/>
            <person name="Peacock S.J."/>
            <person name="Day N.P.J."/>
            <person name="Enright M.C."/>
            <person name="Foster T.J."/>
            <person name="Moore C.E."/>
            <person name="Hurst L."/>
            <person name="Atkin R."/>
            <person name="Barron A."/>
            <person name="Bason N."/>
            <person name="Bentley S.D."/>
            <person name="Chillingworth C."/>
            <person name="Chillingworth T."/>
            <person name="Churcher C."/>
            <person name="Clark L."/>
            <person name="Corton C."/>
            <person name="Cronin A."/>
            <person name="Doggett J."/>
            <person name="Dowd L."/>
            <person name="Feltwell T."/>
            <person name="Hance Z."/>
            <person name="Harris B."/>
            <person name="Hauser H."/>
            <person name="Holroyd S."/>
            <person name="Jagels K."/>
            <person name="James K.D."/>
            <person name="Lennard N."/>
            <person name="Line A."/>
            <person name="Mayes R."/>
            <person name="Moule S."/>
            <person name="Mungall K."/>
            <person name="Ormond D."/>
            <person name="Quail M.A."/>
            <person name="Rabbinowitsch E."/>
            <person name="Rutherford K.M."/>
            <person name="Sanders M."/>
            <person name="Sharp S."/>
            <person name="Simmonds M."/>
            <person name="Stevens K."/>
            <person name="Whitehead S."/>
            <person name="Barrell B.G."/>
            <person name="Spratt B.G."/>
            <person name="Parkhill J."/>
        </authorList>
    </citation>
    <scope>NUCLEOTIDE SEQUENCE [LARGE SCALE GENOMIC DNA]</scope>
    <source>
        <strain>MSSA476</strain>
    </source>
</reference>
<protein>
    <recommendedName>
        <fullName evidence="1">Large ribosomal subunit protein uL5</fullName>
    </recommendedName>
    <alternativeName>
        <fullName evidence="2">50S ribosomal protein L5</fullName>
    </alternativeName>
</protein>
<dbReference type="EMBL" id="BX571857">
    <property type="protein sequence ID" value="CAG43940.1"/>
    <property type="molecule type" value="Genomic_DNA"/>
</dbReference>
<dbReference type="RefSeq" id="WP_001080824.1">
    <property type="nucleotide sequence ID" value="NC_002953.3"/>
</dbReference>
<dbReference type="SMR" id="Q6G783"/>
<dbReference type="KEGG" id="sas:SAS2129"/>
<dbReference type="HOGENOM" id="CLU_061015_2_1_9"/>
<dbReference type="GO" id="GO:1990904">
    <property type="term" value="C:ribonucleoprotein complex"/>
    <property type="evidence" value="ECO:0007669"/>
    <property type="project" value="UniProtKB-KW"/>
</dbReference>
<dbReference type="GO" id="GO:0005840">
    <property type="term" value="C:ribosome"/>
    <property type="evidence" value="ECO:0007669"/>
    <property type="project" value="UniProtKB-KW"/>
</dbReference>
<dbReference type="GO" id="GO:0019843">
    <property type="term" value="F:rRNA binding"/>
    <property type="evidence" value="ECO:0007669"/>
    <property type="project" value="UniProtKB-UniRule"/>
</dbReference>
<dbReference type="GO" id="GO:0003735">
    <property type="term" value="F:structural constituent of ribosome"/>
    <property type="evidence" value="ECO:0007669"/>
    <property type="project" value="InterPro"/>
</dbReference>
<dbReference type="GO" id="GO:0000049">
    <property type="term" value="F:tRNA binding"/>
    <property type="evidence" value="ECO:0007669"/>
    <property type="project" value="UniProtKB-UniRule"/>
</dbReference>
<dbReference type="GO" id="GO:0006412">
    <property type="term" value="P:translation"/>
    <property type="evidence" value="ECO:0007669"/>
    <property type="project" value="UniProtKB-UniRule"/>
</dbReference>
<dbReference type="FunFam" id="3.30.1440.10:FF:000001">
    <property type="entry name" value="50S ribosomal protein L5"/>
    <property type="match status" value="1"/>
</dbReference>
<dbReference type="Gene3D" id="3.30.1440.10">
    <property type="match status" value="1"/>
</dbReference>
<dbReference type="HAMAP" id="MF_01333_B">
    <property type="entry name" value="Ribosomal_uL5_B"/>
    <property type="match status" value="1"/>
</dbReference>
<dbReference type="InterPro" id="IPR002132">
    <property type="entry name" value="Ribosomal_uL5"/>
</dbReference>
<dbReference type="InterPro" id="IPR020930">
    <property type="entry name" value="Ribosomal_uL5_bac-type"/>
</dbReference>
<dbReference type="InterPro" id="IPR031309">
    <property type="entry name" value="Ribosomal_uL5_C"/>
</dbReference>
<dbReference type="InterPro" id="IPR020929">
    <property type="entry name" value="Ribosomal_uL5_CS"/>
</dbReference>
<dbReference type="InterPro" id="IPR022803">
    <property type="entry name" value="Ribosomal_uL5_dom_sf"/>
</dbReference>
<dbReference type="InterPro" id="IPR031310">
    <property type="entry name" value="Ribosomal_uL5_N"/>
</dbReference>
<dbReference type="NCBIfam" id="NF000585">
    <property type="entry name" value="PRK00010.1"/>
    <property type="match status" value="1"/>
</dbReference>
<dbReference type="PANTHER" id="PTHR11994">
    <property type="entry name" value="60S RIBOSOMAL PROTEIN L11-RELATED"/>
    <property type="match status" value="1"/>
</dbReference>
<dbReference type="Pfam" id="PF00281">
    <property type="entry name" value="Ribosomal_L5"/>
    <property type="match status" value="1"/>
</dbReference>
<dbReference type="Pfam" id="PF00673">
    <property type="entry name" value="Ribosomal_L5_C"/>
    <property type="match status" value="1"/>
</dbReference>
<dbReference type="PIRSF" id="PIRSF002161">
    <property type="entry name" value="Ribosomal_L5"/>
    <property type="match status" value="1"/>
</dbReference>
<dbReference type="SUPFAM" id="SSF55282">
    <property type="entry name" value="RL5-like"/>
    <property type="match status" value="1"/>
</dbReference>
<dbReference type="PROSITE" id="PS00358">
    <property type="entry name" value="RIBOSOMAL_L5"/>
    <property type="match status" value="1"/>
</dbReference>
<gene>
    <name evidence="1" type="primary">rplE</name>
    <name type="ordered locus">SAS2129</name>
</gene>
<organism>
    <name type="scientific">Staphylococcus aureus (strain MSSA476)</name>
    <dbReference type="NCBI Taxonomy" id="282459"/>
    <lineage>
        <taxon>Bacteria</taxon>
        <taxon>Bacillati</taxon>
        <taxon>Bacillota</taxon>
        <taxon>Bacilli</taxon>
        <taxon>Bacillales</taxon>
        <taxon>Staphylococcaceae</taxon>
        <taxon>Staphylococcus</taxon>
    </lineage>
</organism>
<feature type="chain" id="PRO_0000124990" description="Large ribosomal subunit protein uL5">
    <location>
        <begin position="1"/>
        <end position="179"/>
    </location>
</feature>
<keyword id="KW-0687">Ribonucleoprotein</keyword>
<keyword id="KW-0689">Ribosomal protein</keyword>
<keyword id="KW-0694">RNA-binding</keyword>
<keyword id="KW-0699">rRNA-binding</keyword>
<keyword id="KW-0820">tRNA-binding</keyword>